<feature type="chain" id="PRO_0000074615" description="Peptidyl-lysine N-acetyltransferase YjaB">
    <location>
        <begin position="1"/>
        <end position="147"/>
    </location>
</feature>
<feature type="domain" description="N-acetyltransferase" evidence="1">
    <location>
        <begin position="3"/>
        <end position="144"/>
    </location>
</feature>
<feature type="mutagenesis site" description="Loss of activity." evidence="3">
    <original>Y</original>
    <variation>A</variation>
    <location>
        <position position="117"/>
    </location>
</feature>
<feature type="sequence conflict" description="In Ref. 5; CAA40098." evidence="5" ref="5">
    <original>S</original>
    <variation>M</variation>
    <location>
        <position position="128"/>
    </location>
</feature>
<feature type="sequence conflict" description="In Ref. 5; CAA40098." evidence="5" ref="5">
    <original>DD</original>
    <variation>GK</variation>
    <location>
        <begin position="131"/>
        <end position="132"/>
    </location>
</feature>
<feature type="sequence conflict" description="In Ref. 5; CAA40098." evidence="5" ref="5">
    <original>A</original>
    <variation>V</variation>
    <location>
        <position position="147"/>
    </location>
</feature>
<feature type="strand" evidence="7">
    <location>
        <begin position="3"/>
        <end position="7"/>
    </location>
</feature>
<feature type="helix" evidence="7">
    <location>
        <begin position="13"/>
        <end position="27"/>
    </location>
</feature>
<feature type="helix" evidence="7">
    <location>
        <begin position="33"/>
        <end position="44"/>
    </location>
</feature>
<feature type="turn" evidence="7">
    <location>
        <begin position="45"/>
        <end position="49"/>
    </location>
</feature>
<feature type="strand" evidence="7">
    <location>
        <begin position="53"/>
        <end position="57"/>
    </location>
</feature>
<feature type="strand" evidence="7">
    <location>
        <begin position="62"/>
        <end position="69"/>
    </location>
</feature>
<feature type="strand" evidence="7">
    <location>
        <begin position="72"/>
        <end position="78"/>
    </location>
</feature>
<feature type="helix" evidence="7">
    <location>
        <begin position="80"/>
        <end position="83"/>
    </location>
</feature>
<feature type="turn" evidence="7">
    <location>
        <begin position="84"/>
        <end position="86"/>
    </location>
</feature>
<feature type="helix" evidence="7">
    <location>
        <begin position="87"/>
        <end position="98"/>
    </location>
</feature>
<feature type="strand" evidence="7">
    <location>
        <begin position="103"/>
        <end position="107"/>
    </location>
</feature>
<feature type="helix" evidence="7">
    <location>
        <begin position="111"/>
        <end position="120"/>
    </location>
</feature>
<feature type="strand" evidence="7">
    <location>
        <begin position="122"/>
        <end position="127"/>
    </location>
</feature>
<feature type="strand" evidence="7">
    <location>
        <begin position="129"/>
        <end position="134"/>
    </location>
</feature>
<feature type="strand" evidence="7">
    <location>
        <begin position="139"/>
        <end position="144"/>
    </location>
</feature>
<protein>
    <recommendedName>
        <fullName evidence="5">Peptidyl-lysine N-acetyltransferase YjaB</fullName>
        <ecNumber evidence="3">2.3.1.-</ecNumber>
    </recommendedName>
    <alternativeName>
        <fullName evidence="4">KAT</fullName>
    </alternativeName>
</protein>
<accession>P09163</accession>
<accession>Q2M6U2</accession>
<accession>Q47614</accession>
<keyword id="KW-0002">3D-structure</keyword>
<keyword id="KW-0012">Acyltransferase</keyword>
<keyword id="KW-1185">Reference proteome</keyword>
<keyword id="KW-0808">Transferase</keyword>
<evidence type="ECO:0000255" key="1">
    <source>
        <dbReference type="PROSITE-ProRule" id="PRU00532"/>
    </source>
</evidence>
<evidence type="ECO:0000269" key="2">
    <source>
    </source>
</evidence>
<evidence type="ECO:0000269" key="3">
    <source>
    </source>
</evidence>
<evidence type="ECO:0000303" key="4">
    <source>
    </source>
</evidence>
<evidence type="ECO:0000305" key="5"/>
<evidence type="ECO:0007744" key="6">
    <source>
        <dbReference type="PDB" id="2KCW"/>
    </source>
</evidence>
<evidence type="ECO:0007829" key="7">
    <source>
        <dbReference type="PDB" id="2KCW"/>
    </source>
</evidence>
<name>YJAB_ECOLI</name>
<comment type="function">
    <text evidence="2 3">N-epsilon-lysine acetyltransferase that catalyzes acetylation of a large number of proteins (PubMed:30352934). Binds acetyl-CoA (PubMed:19343803).</text>
</comment>
<comment type="catalytic activity">
    <reaction evidence="3">
        <text>L-lysyl-[protein] + acetyl-CoA = N(6)-acetyl-L-lysyl-[protein] + CoA + H(+)</text>
        <dbReference type="Rhea" id="RHEA:45948"/>
        <dbReference type="Rhea" id="RHEA-COMP:9752"/>
        <dbReference type="Rhea" id="RHEA-COMP:10731"/>
        <dbReference type="ChEBI" id="CHEBI:15378"/>
        <dbReference type="ChEBI" id="CHEBI:29969"/>
        <dbReference type="ChEBI" id="CHEBI:57287"/>
        <dbReference type="ChEBI" id="CHEBI:57288"/>
        <dbReference type="ChEBI" id="CHEBI:61930"/>
    </reaction>
</comment>
<comment type="similarity">
    <text>Belongs to the acetyltransferase family.</text>
</comment>
<gene>
    <name type="primary">yjaB</name>
    <name type="ordered locus">b4012</name>
    <name type="ordered locus">JW3972</name>
</gene>
<sequence length="147" mass="16447">MVISIRRSRHEEGEELVAIWCRSVDATHDFLSAEYRTELEDLVRSFLPEAPLWVAVNERDQPVGFMLLSGQHMDALFIDPDVRGCGVGRVLVEHALSMAPELTTNVNEQNEQAVGFYKKVGFKVTGRSEVDDLGKPYPLLNLAYVGA</sequence>
<dbReference type="EC" id="2.3.1.-" evidence="3"/>
<dbReference type="EMBL" id="X02800">
    <property type="protein sequence ID" value="CAA26570.1"/>
    <property type="molecule type" value="Genomic_DNA"/>
</dbReference>
<dbReference type="EMBL" id="U00006">
    <property type="protein sequence ID" value="AAC43106.1"/>
    <property type="molecule type" value="Genomic_DNA"/>
</dbReference>
<dbReference type="EMBL" id="U00096">
    <property type="protein sequence ID" value="AAC76982.1"/>
    <property type="molecule type" value="Genomic_DNA"/>
</dbReference>
<dbReference type="EMBL" id="AP009048">
    <property type="protein sequence ID" value="BAE78014.1"/>
    <property type="molecule type" value="Genomic_DNA"/>
</dbReference>
<dbReference type="EMBL" id="X56780">
    <property type="protein sequence ID" value="CAA40098.1"/>
    <property type="molecule type" value="Genomic_DNA"/>
</dbReference>
<dbReference type="PIR" id="B24340">
    <property type="entry name" value="Q3ECE6"/>
</dbReference>
<dbReference type="RefSeq" id="NP_418436.1">
    <property type="nucleotide sequence ID" value="NC_000913.3"/>
</dbReference>
<dbReference type="RefSeq" id="WP_000237004.1">
    <property type="nucleotide sequence ID" value="NZ_SSZK01000049.1"/>
</dbReference>
<dbReference type="PDB" id="2KCW">
    <property type="method" value="NMR"/>
    <property type="chains" value="A=1-147"/>
</dbReference>
<dbReference type="PDBsum" id="2KCW"/>
<dbReference type="BMRB" id="P09163"/>
<dbReference type="SMR" id="P09163"/>
<dbReference type="BioGRID" id="4262085">
    <property type="interactions" value="10"/>
</dbReference>
<dbReference type="FunCoup" id="P09163">
    <property type="interactions" value="90"/>
</dbReference>
<dbReference type="IntAct" id="P09163">
    <property type="interactions" value="1"/>
</dbReference>
<dbReference type="STRING" id="511145.b4012"/>
<dbReference type="PaxDb" id="511145-b4012"/>
<dbReference type="EnsemblBacteria" id="AAC76982">
    <property type="protein sequence ID" value="AAC76982"/>
    <property type="gene ID" value="b4012"/>
</dbReference>
<dbReference type="GeneID" id="948514"/>
<dbReference type="KEGG" id="ecj:JW3972"/>
<dbReference type="KEGG" id="eco:b4012"/>
<dbReference type="KEGG" id="ecoc:C3026_21675"/>
<dbReference type="PATRIC" id="fig|1411691.4.peg.2701"/>
<dbReference type="EchoBASE" id="EB1192"/>
<dbReference type="eggNOG" id="COG0456">
    <property type="taxonomic scope" value="Bacteria"/>
</dbReference>
<dbReference type="HOGENOM" id="CLU_013985_21_0_6"/>
<dbReference type="InParanoid" id="P09163"/>
<dbReference type="OMA" id="IQAFMGV"/>
<dbReference type="OrthoDB" id="9789605at2"/>
<dbReference type="PhylomeDB" id="P09163"/>
<dbReference type="BioCyc" id="EcoCyc:EG11207-MONOMER"/>
<dbReference type="BioCyc" id="MetaCyc:EG11207-MONOMER"/>
<dbReference type="BRENDA" id="2.3.1.286">
    <property type="organism ID" value="2026"/>
</dbReference>
<dbReference type="EvolutionaryTrace" id="P09163"/>
<dbReference type="PRO" id="PR:P09163"/>
<dbReference type="Proteomes" id="UP000000625">
    <property type="component" value="Chromosome"/>
</dbReference>
<dbReference type="GO" id="GO:0061733">
    <property type="term" value="F:protein-lysine-acetyltransferase activity"/>
    <property type="evidence" value="ECO:0000314"/>
    <property type="project" value="EcoCyc"/>
</dbReference>
<dbReference type="CDD" id="cd04301">
    <property type="entry name" value="NAT_SF"/>
    <property type="match status" value="1"/>
</dbReference>
<dbReference type="Gene3D" id="3.40.630.30">
    <property type="match status" value="1"/>
</dbReference>
<dbReference type="InterPro" id="IPR016181">
    <property type="entry name" value="Acyl_CoA_acyltransferase"/>
</dbReference>
<dbReference type="InterPro" id="IPR000182">
    <property type="entry name" value="GNAT_dom"/>
</dbReference>
<dbReference type="NCBIfam" id="NF007807">
    <property type="entry name" value="PRK10514.1"/>
    <property type="match status" value="1"/>
</dbReference>
<dbReference type="PANTHER" id="PTHR43800">
    <property type="entry name" value="PEPTIDYL-LYSINE N-ACETYLTRANSFERASE YJAB"/>
    <property type="match status" value="1"/>
</dbReference>
<dbReference type="PANTHER" id="PTHR43800:SF1">
    <property type="entry name" value="PEPTIDYL-LYSINE N-ACETYLTRANSFERASE YJAB"/>
    <property type="match status" value="1"/>
</dbReference>
<dbReference type="Pfam" id="PF13673">
    <property type="entry name" value="Acetyltransf_10"/>
    <property type="match status" value="1"/>
</dbReference>
<dbReference type="SUPFAM" id="SSF55729">
    <property type="entry name" value="Acyl-CoA N-acyltransferases (Nat)"/>
    <property type="match status" value="1"/>
</dbReference>
<dbReference type="PROSITE" id="PS51186">
    <property type="entry name" value="GNAT"/>
    <property type="match status" value="1"/>
</dbReference>
<proteinExistence type="evidence at protein level"/>
<organism>
    <name type="scientific">Escherichia coli (strain K12)</name>
    <dbReference type="NCBI Taxonomy" id="83333"/>
    <lineage>
        <taxon>Bacteria</taxon>
        <taxon>Pseudomonadati</taxon>
        <taxon>Pseudomonadota</taxon>
        <taxon>Gammaproteobacteria</taxon>
        <taxon>Enterobacterales</taxon>
        <taxon>Enterobacteriaceae</taxon>
        <taxon>Escherichia</taxon>
    </lineage>
</organism>
<reference key="1">
    <citation type="journal article" date="1985" name="Nucleic Acids Res.">
        <title>The sequence of the distal end of the E. coli ribosomal RNA rrnE operon indicates conserved features are shared by rrn operons.</title>
        <authorList>
            <person name="Liebke H."/>
            <person name="Hatfull G."/>
        </authorList>
    </citation>
    <scope>NUCLEOTIDE SEQUENCE [GENOMIC DNA]</scope>
</reference>
<reference key="2">
    <citation type="journal article" date="1993" name="Nucleic Acids Res.">
        <title>Analysis of the Escherichia coli genome. IV. DNA sequence of the region from 89.2 to 92.8 minutes.</title>
        <authorList>
            <person name="Blattner F.R."/>
            <person name="Burland V.D."/>
            <person name="Plunkett G. III"/>
            <person name="Sofia H.J."/>
            <person name="Daniels D.L."/>
        </authorList>
    </citation>
    <scope>NUCLEOTIDE SEQUENCE [LARGE SCALE GENOMIC DNA]</scope>
    <source>
        <strain>K12 / MG1655 / ATCC 47076</strain>
    </source>
</reference>
<reference key="3">
    <citation type="journal article" date="1997" name="Science">
        <title>The complete genome sequence of Escherichia coli K-12.</title>
        <authorList>
            <person name="Blattner F.R."/>
            <person name="Plunkett G. III"/>
            <person name="Bloch C.A."/>
            <person name="Perna N.T."/>
            <person name="Burland V."/>
            <person name="Riley M."/>
            <person name="Collado-Vides J."/>
            <person name="Glasner J.D."/>
            <person name="Rode C.K."/>
            <person name="Mayhew G.F."/>
            <person name="Gregor J."/>
            <person name="Davis N.W."/>
            <person name="Kirkpatrick H.A."/>
            <person name="Goeden M.A."/>
            <person name="Rose D.J."/>
            <person name="Mau B."/>
            <person name="Shao Y."/>
        </authorList>
    </citation>
    <scope>NUCLEOTIDE SEQUENCE [LARGE SCALE GENOMIC DNA]</scope>
    <source>
        <strain>K12 / MG1655 / ATCC 47076</strain>
    </source>
</reference>
<reference key="4">
    <citation type="journal article" date="2006" name="Mol. Syst. Biol.">
        <title>Highly accurate genome sequences of Escherichia coli K-12 strains MG1655 and W3110.</title>
        <authorList>
            <person name="Hayashi K."/>
            <person name="Morooka N."/>
            <person name="Yamamoto Y."/>
            <person name="Fujita K."/>
            <person name="Isono K."/>
            <person name="Choi S."/>
            <person name="Ohtsubo E."/>
            <person name="Baba T."/>
            <person name="Wanner B.L."/>
            <person name="Mori H."/>
            <person name="Horiuchi T."/>
        </authorList>
    </citation>
    <scope>NUCLEOTIDE SEQUENCE [LARGE SCALE GENOMIC DNA]</scope>
    <source>
        <strain>K12 / W3110 / ATCC 27325 / DSM 5911</strain>
    </source>
</reference>
<reference key="5">
    <citation type="journal article" date="1991" name="Nucleic Acids Res.">
        <title>Transcriptional termination sequence at the end of the Escherichia coli ribosomal RNA G operon: complex terminators and antitermination.</title>
        <authorList>
            <person name="Albrechtsen B."/>
            <person name="Ross B.M."/>
            <person name="Squires C."/>
            <person name="Squires C.L."/>
        </authorList>
    </citation>
    <scope>NUCLEOTIDE SEQUENCE [GENOMIC DNA] OF 128-147</scope>
    <source>
        <strain>K12</strain>
    </source>
</reference>
<reference key="6">
    <citation type="journal article" date="2018" name="MBio">
        <title>Identification of novel protein lysine acetyltransferases in Escherichia coli.</title>
        <authorList>
            <person name="Christensen D.G."/>
            <person name="Meyer J.G."/>
            <person name="Baumgartner J.T."/>
            <person name="D'Souza A.K."/>
            <person name="Nelson W.C."/>
            <person name="Payne S.H."/>
            <person name="Kuhn M.L."/>
            <person name="Schilling B."/>
            <person name="Wolfe A.J."/>
        </authorList>
    </citation>
    <scope>FUNCTION</scope>
    <scope>CATALYTIC ACTIVITY</scope>
    <scope>MUTAGENESIS OF TYR-117</scope>
    <source>
        <strain>K12</strain>
    </source>
</reference>
<reference key="7">
    <citation type="journal article" date="2019" name="MBio">
        <title>Correction for Christensen et al., 'Identification of novel protein lysine acetyltransferases in Escherichia coli'.</title>
        <authorList>
            <person name="Christensen D.G."/>
            <person name="Meyer J.G."/>
            <person name="Baumgartner J.T."/>
            <person name="D'Souza A.K."/>
            <person name="Nelson W.C."/>
            <person name="Payne S.H."/>
            <person name="Kuhn M.L."/>
            <person name="Schilling B."/>
            <person name="Wolfe A.J."/>
        </authorList>
    </citation>
    <scope>ERRATUM OF PUBMED:30352934</scope>
</reference>
<reference evidence="6" key="8">
    <citation type="journal article" date="2009" name="Proteins">
        <title>Solution structure of Apo-YjaB from Escherichia coli.</title>
        <authorList>
            <person name="Lu J."/>
            <person name="Wang X."/>
            <person name="Xia B."/>
            <person name="Jin C."/>
        </authorList>
    </citation>
    <scope>STRUCTURE BY NMR</scope>
    <scope>ACETYL-COA-BINDING</scope>
</reference>